<name>SIM43_MOUSE</name>
<feature type="chain" id="PRO_0000458858" description="Small integral membrane protein 43">
    <location>
        <begin position="1"/>
        <end position="63"/>
    </location>
</feature>
<feature type="transmembrane region" description="Helical" evidence="1">
    <location>
        <begin position="9"/>
        <end position="29"/>
    </location>
</feature>
<feature type="region of interest" description="Important for interaction with SLC2A1 and SLC2A3" evidence="2">
    <location>
        <begin position="7"/>
        <end position="29"/>
    </location>
</feature>
<feature type="region of interest" description="Important for interaction with SLC2A1 and SLC2A3" evidence="2">
    <location>
        <begin position="51"/>
        <end position="57"/>
    </location>
</feature>
<gene>
    <name evidence="5" type="primary">Smim43</name>
    <name evidence="5" type="synonym">Gm11549</name>
</gene>
<proteinExistence type="evidence at protein level"/>
<protein>
    <recommendedName>
        <fullName evidence="5">Small integral membrane protein 43</fullName>
    </recommendedName>
    <alternativeName>
        <fullName evidence="3">Nodal enhanced mesendoderm micropeptide</fullName>
        <shortName evidence="3">NEMEP</shortName>
    </alternativeName>
</protein>
<organism evidence="6">
    <name type="scientific">Mus musculus</name>
    <name type="common">Mouse</name>
    <dbReference type="NCBI Taxonomy" id="10090"/>
    <lineage>
        <taxon>Eukaryota</taxon>
        <taxon>Metazoa</taxon>
        <taxon>Chordata</taxon>
        <taxon>Craniata</taxon>
        <taxon>Vertebrata</taxon>
        <taxon>Euteleostomi</taxon>
        <taxon>Mammalia</taxon>
        <taxon>Eutheria</taxon>
        <taxon>Euarchontoglires</taxon>
        <taxon>Glires</taxon>
        <taxon>Rodentia</taxon>
        <taxon>Myomorpha</taxon>
        <taxon>Muroidea</taxon>
        <taxon>Muridae</taxon>
        <taxon>Murinae</taxon>
        <taxon>Mus</taxon>
        <taxon>Mus</taxon>
    </lineage>
</organism>
<accession>A0A286YD83</accession>
<reference evidence="6" key="1">
    <citation type="journal article" date="2009" name="PLoS Biol.">
        <title>Lineage-specific biology revealed by a finished genome assembly of the mouse.</title>
        <authorList>
            <person name="Church D.M."/>
            <person name="Goodstadt L."/>
            <person name="Hillier L.W."/>
            <person name="Zody M.C."/>
            <person name="Goldstein S."/>
            <person name="She X."/>
            <person name="Bult C.J."/>
            <person name="Agarwala R."/>
            <person name="Cherry J.L."/>
            <person name="DiCuccio M."/>
            <person name="Hlavina W."/>
            <person name="Kapustin Y."/>
            <person name="Meric P."/>
            <person name="Maglott D."/>
            <person name="Birtle Z."/>
            <person name="Marques A.C."/>
            <person name="Graves T."/>
            <person name="Zhou S."/>
            <person name="Teague B."/>
            <person name="Potamousis K."/>
            <person name="Churas C."/>
            <person name="Place M."/>
            <person name="Herschleb J."/>
            <person name="Runnheim R."/>
            <person name="Forrest D."/>
            <person name="Amos-Landgraf J."/>
            <person name="Schwartz D.C."/>
            <person name="Cheng Z."/>
            <person name="Lindblad-Toh K."/>
            <person name="Eichler E.E."/>
            <person name="Ponting C.P."/>
        </authorList>
    </citation>
    <scope>NUCLEOTIDE SEQUENCE [LARGE SCALE GENOMIC DNA]</scope>
    <source>
        <strain evidence="6">C57BL/6J</strain>
    </source>
</reference>
<reference evidence="4" key="2">
    <citation type="journal article" date="2022" name="Nat. Commun.">
        <title>A Nodal enhanced micropeptide NEMEP regulates glucose uptake during mesendoderm differentiation of embryonic stem cells.</title>
        <authorList>
            <person name="Fu H."/>
            <person name="Wang T."/>
            <person name="Kong X."/>
            <person name="Yan K."/>
            <person name="Yang Y."/>
            <person name="Cao J."/>
            <person name="Yuan Y."/>
            <person name="Wang N."/>
            <person name="Kee K."/>
            <person name="Lu Z.J."/>
            <person name="Xi Q."/>
        </authorList>
    </citation>
    <scope>PROTEIN SEQUENCE OF 34-47</scope>
    <scope>FUNCTION</scope>
    <scope>INTERACTION WITH SLC2A1 AND SLC2A3</scope>
    <scope>SUBCELLULAR LOCATION</scope>
    <scope>TISSUE SPECIFICITY</scope>
    <scope>IDENTIFICATION BY MASS SPECTROMETRY</scope>
</reference>
<comment type="function">
    <text evidence="2">Required for mesendoderm differentiation (PubMed:35810171). Interacts with glucose transporters and promotes glucose uptake (PubMed:35810171). Probably augments the glucose uptake capacity of glucose transporter proteins to meet the energy needs of mesendoderm differentiation (PubMed:35810171).</text>
</comment>
<comment type="subunit">
    <text evidence="2">Interacts with glucose transporters SLC2A1/GLUT1 and SLC2A3/GLUT3; the interactions may promote SLC2A1- and SLC2A3-mediated glucose transport to meet the energy needs of mesendoderm differentiation.</text>
</comment>
<comment type="interaction">
    <interactant intactId="EBI-46438951">
        <id>A0A286YD83</id>
    </interactant>
    <interactant intactId="EBI-646060">
        <id>P17809</id>
        <label>Slc2a1</label>
    </interactant>
    <organismsDiffer>false</organismsDiffer>
    <experiments>5</experiments>
</comment>
<comment type="interaction">
    <interactant intactId="EBI-46438951">
        <id>A0A286YD83</id>
    </interactant>
    <interactant intactId="EBI-21145965">
        <id>P32037</id>
        <label>Slc2a3</label>
    </interactant>
    <organismsDiffer>false</organismsDiffer>
    <experiments>6</experiments>
</comment>
<comment type="subcellular location">
    <subcellularLocation>
        <location evidence="2">Cell membrane</location>
        <topology evidence="1">Single-pass membrane protein</topology>
    </subcellularLocation>
</comment>
<comment type="tissue specificity">
    <text evidence="2">Accumulates in the posterior primitive streak of mid-gastrulation embryos at 7.0 dpc (PubMed:35810171). In the adult, highly abundant and enriched in the brain compared to other organs (PubMed:35810171).</text>
</comment>
<sequence>MEWKLNLLLYLALFFFLLFLLFLLLFVVIKQLKNSVANTAGTLQPGRLSLHREPWGFNNEQAV</sequence>
<dbReference type="RefSeq" id="NP_001371198.1">
    <property type="nucleotide sequence ID" value="NM_001384269.1"/>
</dbReference>
<dbReference type="RefSeq" id="XP_036018693.1">
    <property type="nucleotide sequence ID" value="XM_036162800.1"/>
</dbReference>
<dbReference type="SMR" id="A0A286YD83"/>
<dbReference type="IntAct" id="A0A286YD83">
    <property type="interactions" value="206"/>
</dbReference>
<dbReference type="STRING" id="10090.ENSMUSP00000153318"/>
<dbReference type="ProteomicsDB" id="352985"/>
<dbReference type="Antibodypedia" id="77843">
    <property type="antibodies" value="4 antibodies from 4 providers"/>
</dbReference>
<dbReference type="Ensembl" id="ENSMUST00000124606.3">
    <property type="protein sequence ID" value="ENSMUSP00000153318.2"/>
    <property type="gene ID" value="ENSMUSG00000085007.4"/>
</dbReference>
<dbReference type="GeneID" id="100503068"/>
<dbReference type="AGR" id="MGI:3650339"/>
<dbReference type="MGI" id="MGI:3650339">
    <property type="gene designation" value="Smim43"/>
</dbReference>
<dbReference type="VEuPathDB" id="HostDB:ENSMUSG00000085007"/>
<dbReference type="GeneTree" id="ENSGT01010000222815"/>
<dbReference type="InParanoid" id="A0A286YD83"/>
<dbReference type="OMA" id="MEWELNF"/>
<dbReference type="OrthoDB" id="9450496at2759"/>
<dbReference type="PRO" id="PR:A0A286YD83"/>
<dbReference type="Proteomes" id="UP000000589">
    <property type="component" value="Chromosome 3"/>
</dbReference>
<dbReference type="RNAct" id="A0A286YD83">
    <property type="molecule type" value="protein"/>
</dbReference>
<dbReference type="Bgee" id="ENSMUSG00000085007">
    <property type="expression patterns" value="Expressed in primary visual cortex and 24 other cell types or tissues"/>
</dbReference>
<dbReference type="GO" id="GO:0005886">
    <property type="term" value="C:plasma membrane"/>
    <property type="evidence" value="ECO:0000314"/>
    <property type="project" value="UniProtKB"/>
</dbReference>
<dbReference type="GO" id="GO:0044325">
    <property type="term" value="F:transmembrane transporter binding"/>
    <property type="evidence" value="ECO:0000353"/>
    <property type="project" value="UniProtKB"/>
</dbReference>
<dbReference type="GO" id="GO:0048382">
    <property type="term" value="P:mesendoderm development"/>
    <property type="evidence" value="ECO:0000315"/>
    <property type="project" value="UniProtKB"/>
</dbReference>
<dbReference type="GO" id="GO:0010828">
    <property type="term" value="P:positive regulation of D-glucose transmembrane transport"/>
    <property type="evidence" value="ECO:0000315"/>
    <property type="project" value="UniProtKB"/>
</dbReference>
<dbReference type="InterPro" id="IPR054149">
    <property type="entry name" value="SMIM43"/>
</dbReference>
<dbReference type="Pfam" id="PF21976">
    <property type="entry name" value="SMIM43"/>
    <property type="match status" value="1"/>
</dbReference>
<evidence type="ECO:0000255" key="1"/>
<evidence type="ECO:0000269" key="2">
    <source>
    </source>
</evidence>
<evidence type="ECO:0000303" key="3">
    <source>
    </source>
</evidence>
<evidence type="ECO:0000305" key="4"/>
<evidence type="ECO:0000312" key="5">
    <source>
        <dbReference type="MGI" id="MGI:3650339"/>
    </source>
</evidence>
<evidence type="ECO:0000312" key="6">
    <source>
        <dbReference type="Proteomes" id="UP000000589"/>
    </source>
</evidence>
<keyword id="KW-1003">Cell membrane</keyword>
<keyword id="KW-0903">Direct protein sequencing</keyword>
<keyword id="KW-0472">Membrane</keyword>
<keyword id="KW-1185">Reference proteome</keyword>
<keyword id="KW-0812">Transmembrane</keyword>
<keyword id="KW-1133">Transmembrane helix</keyword>